<accession>C4K183</accession>
<reference key="1">
    <citation type="journal article" date="2009" name="PLoS ONE">
        <title>Genome sequence of the endosymbiont Rickettsia peacockii and comparison with virulent Rickettsia rickettsii: identification of virulence factors.</title>
        <authorList>
            <person name="Felsheim R.F."/>
            <person name="Kurtti T.J."/>
            <person name="Munderloh U.G."/>
        </authorList>
    </citation>
    <scope>NUCLEOTIDE SEQUENCE [LARGE SCALE GENOMIC DNA]</scope>
    <source>
        <strain>Rustic</strain>
    </source>
</reference>
<sequence length="384" mass="44284">MLASYASDPLKSRGRLYKEIPTSYRNEFERDRDRIIHTNAFRRLQYKTQVFINHEGDHYRNRLTHSLEVSTVARSVASTLNLSNDLAETIALAHDLGHTPFGHAGERALNECMREYNGFSHNAQSLKILTLLEKRYAAYNGVNLTWEVLEGIVKHNGPILGEINEYIAEYNKQNDLELSTYASAEAQIAALADDISYISHDLEDSIGAKIIDFNSLAELKYIDQHVVELKSKFKNISSSCLIYEVVRKLIHELITDLLWQTKENLNKEKITNIDEIRNLNYQIVDFTEKTNKNIKETKKFLHERVYKSNKITAISLKCTKIVQGLFKIYMDDINLLPVNWKMLIDSNETYSKARVVADYIAGMTDRFAIQEYNQLCSTSYITCF</sequence>
<evidence type="ECO:0000255" key="1">
    <source>
        <dbReference type="HAMAP-Rule" id="MF_01212"/>
    </source>
</evidence>
<evidence type="ECO:0000255" key="2">
    <source>
        <dbReference type="PROSITE-ProRule" id="PRU01175"/>
    </source>
</evidence>
<name>DGTL1_RICPU</name>
<organism>
    <name type="scientific">Rickettsia peacockii (strain Rustic)</name>
    <dbReference type="NCBI Taxonomy" id="562019"/>
    <lineage>
        <taxon>Bacteria</taxon>
        <taxon>Pseudomonadati</taxon>
        <taxon>Pseudomonadota</taxon>
        <taxon>Alphaproteobacteria</taxon>
        <taxon>Rickettsiales</taxon>
        <taxon>Rickettsiaceae</taxon>
        <taxon>Rickettsieae</taxon>
        <taxon>Rickettsia</taxon>
        <taxon>spotted fever group</taxon>
    </lineage>
</organism>
<protein>
    <recommendedName>
        <fullName evidence="1">Deoxyguanosinetriphosphate triphosphohydrolase-like protein</fullName>
    </recommendedName>
</protein>
<keyword id="KW-0378">Hydrolase</keyword>
<feature type="chain" id="PRO_1000213890" description="Deoxyguanosinetriphosphate triphosphohydrolase-like protein">
    <location>
        <begin position="1"/>
        <end position="384"/>
    </location>
</feature>
<feature type="domain" description="HD" evidence="2">
    <location>
        <begin position="62"/>
        <end position="198"/>
    </location>
</feature>
<gene>
    <name type="ordered locus">RPR_02560</name>
</gene>
<dbReference type="EMBL" id="CP001227">
    <property type="protein sequence ID" value="ACR47334.1"/>
    <property type="molecule type" value="Genomic_DNA"/>
</dbReference>
<dbReference type="RefSeq" id="WP_012736594.1">
    <property type="nucleotide sequence ID" value="NC_012730.1"/>
</dbReference>
<dbReference type="SMR" id="C4K183"/>
<dbReference type="KEGG" id="rpk:RPR_02560"/>
<dbReference type="HOGENOM" id="CLU_028163_1_0_5"/>
<dbReference type="Proteomes" id="UP000005015">
    <property type="component" value="Chromosome"/>
</dbReference>
<dbReference type="GO" id="GO:0008832">
    <property type="term" value="F:dGTPase activity"/>
    <property type="evidence" value="ECO:0007669"/>
    <property type="project" value="TreeGrafter"/>
</dbReference>
<dbReference type="GO" id="GO:0006203">
    <property type="term" value="P:dGTP catabolic process"/>
    <property type="evidence" value="ECO:0007669"/>
    <property type="project" value="TreeGrafter"/>
</dbReference>
<dbReference type="CDD" id="cd00077">
    <property type="entry name" value="HDc"/>
    <property type="match status" value="1"/>
</dbReference>
<dbReference type="Gene3D" id="1.10.3210.10">
    <property type="entry name" value="Hypothetical protein af1432"/>
    <property type="match status" value="1"/>
</dbReference>
<dbReference type="HAMAP" id="MF_01212">
    <property type="entry name" value="dGTPase_type2"/>
    <property type="match status" value="1"/>
</dbReference>
<dbReference type="InterPro" id="IPR006261">
    <property type="entry name" value="dGTPase"/>
</dbReference>
<dbReference type="InterPro" id="IPR050135">
    <property type="entry name" value="dGTPase-like"/>
</dbReference>
<dbReference type="InterPro" id="IPR023023">
    <property type="entry name" value="dNTPase_2"/>
</dbReference>
<dbReference type="InterPro" id="IPR003607">
    <property type="entry name" value="HD/PDEase_dom"/>
</dbReference>
<dbReference type="InterPro" id="IPR006674">
    <property type="entry name" value="HD_domain"/>
</dbReference>
<dbReference type="InterPro" id="IPR026875">
    <property type="entry name" value="PHydrolase_assoc_dom"/>
</dbReference>
<dbReference type="NCBIfam" id="TIGR01353">
    <property type="entry name" value="dGTP_triPase"/>
    <property type="match status" value="1"/>
</dbReference>
<dbReference type="NCBIfam" id="NF002326">
    <property type="entry name" value="PRK01286.1-1"/>
    <property type="match status" value="1"/>
</dbReference>
<dbReference type="NCBIfam" id="NF002330">
    <property type="entry name" value="PRK01286.1-5"/>
    <property type="match status" value="1"/>
</dbReference>
<dbReference type="PANTHER" id="PTHR11373:SF43">
    <property type="entry name" value="DEOXYGUANOSINETRIPHOSPHATE TRIPHOSPHOHYDROLASE-LIKE PROTEIN"/>
    <property type="match status" value="1"/>
</dbReference>
<dbReference type="PANTHER" id="PTHR11373">
    <property type="entry name" value="DEOXYNUCLEOSIDE TRIPHOSPHATE TRIPHOSPHOHYDROLASE"/>
    <property type="match status" value="1"/>
</dbReference>
<dbReference type="Pfam" id="PF01966">
    <property type="entry name" value="HD"/>
    <property type="match status" value="1"/>
</dbReference>
<dbReference type="Pfam" id="PF13286">
    <property type="entry name" value="HD_assoc"/>
    <property type="match status" value="1"/>
</dbReference>
<dbReference type="SMART" id="SM00471">
    <property type="entry name" value="HDc"/>
    <property type="match status" value="1"/>
</dbReference>
<dbReference type="SUPFAM" id="SSF109604">
    <property type="entry name" value="HD-domain/PDEase-like"/>
    <property type="match status" value="1"/>
</dbReference>
<dbReference type="PROSITE" id="PS51831">
    <property type="entry name" value="HD"/>
    <property type="match status" value="1"/>
</dbReference>
<proteinExistence type="inferred from homology"/>
<comment type="similarity">
    <text evidence="1">Belongs to the dGTPase family. Type 2 subfamily.</text>
</comment>